<reference key="1">
    <citation type="submission" date="2008-10" db="EMBL/GenBank/DDBJ databases">
        <title>Genome sequence of Bacillus cereus AH820.</title>
        <authorList>
            <person name="Dodson R.J."/>
            <person name="Durkin A.S."/>
            <person name="Rosovitz M.J."/>
            <person name="Rasko D.A."/>
            <person name="Hoffmaster A."/>
            <person name="Ravel J."/>
            <person name="Sutton G."/>
        </authorList>
    </citation>
    <scope>NUCLEOTIDE SEQUENCE [LARGE SCALE GENOMIC DNA]</scope>
    <source>
        <strain>AH820</strain>
    </source>
</reference>
<comment type="function">
    <text evidence="1">Catalyzes the transfer of the phosphoribosyl group of 5-phosphorylribose-1-pyrophosphate (PRPP) to anthranilate to yield N-(5'-phosphoribosyl)-anthranilate (PRA).</text>
</comment>
<comment type="catalytic activity">
    <reaction evidence="1">
        <text>N-(5-phospho-beta-D-ribosyl)anthranilate + diphosphate = 5-phospho-alpha-D-ribose 1-diphosphate + anthranilate</text>
        <dbReference type="Rhea" id="RHEA:11768"/>
        <dbReference type="ChEBI" id="CHEBI:16567"/>
        <dbReference type="ChEBI" id="CHEBI:18277"/>
        <dbReference type="ChEBI" id="CHEBI:33019"/>
        <dbReference type="ChEBI" id="CHEBI:58017"/>
        <dbReference type="EC" id="2.4.2.18"/>
    </reaction>
</comment>
<comment type="cofactor">
    <cofactor evidence="1">
        <name>Mg(2+)</name>
        <dbReference type="ChEBI" id="CHEBI:18420"/>
    </cofactor>
    <text evidence="1">Binds 2 magnesium ions per monomer.</text>
</comment>
<comment type="pathway">
    <text evidence="1">Amino-acid biosynthesis; L-tryptophan biosynthesis; L-tryptophan from chorismate: step 2/5.</text>
</comment>
<comment type="subunit">
    <text evidence="1">Homodimer.</text>
</comment>
<comment type="similarity">
    <text evidence="1">Belongs to the anthranilate phosphoribosyltransferase family.</text>
</comment>
<protein>
    <recommendedName>
        <fullName evidence="1">Anthranilate phosphoribosyltransferase</fullName>
        <ecNumber evidence="1">2.4.2.18</ecNumber>
    </recommendedName>
</protein>
<proteinExistence type="inferred from homology"/>
<evidence type="ECO:0000255" key="1">
    <source>
        <dbReference type="HAMAP-Rule" id="MF_00211"/>
    </source>
</evidence>
<keyword id="KW-0028">Amino-acid biosynthesis</keyword>
<keyword id="KW-0057">Aromatic amino acid biosynthesis</keyword>
<keyword id="KW-0328">Glycosyltransferase</keyword>
<keyword id="KW-0460">Magnesium</keyword>
<keyword id="KW-0479">Metal-binding</keyword>
<keyword id="KW-0808">Transferase</keyword>
<keyword id="KW-0822">Tryptophan biosynthesis</keyword>
<sequence length="341" mass="36893">MNNYLRKLVEGQHLTEEEMYKAGLLLLNENILESEIAAFLVLLKAKGETAEEIYGLVRALREKALPFSNHIQGAMDNCGTGGDGAQTFNISTTSAFVLAGAGVKVAKHGNRAVSSKTGSADLLEELGVNISSTPNEIDYLLEHVGIAFLFAPAMHPALKRIMKIRKELNVPTIFNLIGPLTNPVNLETQFVGIYKRDMLLPVAQVLQKLGRKQALVVNGSGFLDEASLQGENHVVILKDNEIVETSIEPEKYGFSIVKNEEIRGGNSKENAKITLGVLSGEKSVYRDTVLFNAGLALFANGKAKTIEEGITLAAHSIDSGKALAKLNLLIAASNEELERVN</sequence>
<feature type="chain" id="PRO_1000198803" description="Anthranilate phosphoribosyltransferase">
    <location>
        <begin position="1"/>
        <end position="341"/>
    </location>
</feature>
<feature type="binding site" evidence="1">
    <location>
        <position position="79"/>
    </location>
    <ligand>
        <name>5-phospho-alpha-D-ribose 1-diphosphate</name>
        <dbReference type="ChEBI" id="CHEBI:58017"/>
    </ligand>
</feature>
<feature type="binding site" evidence="1">
    <location>
        <position position="79"/>
    </location>
    <ligand>
        <name>anthranilate</name>
        <dbReference type="ChEBI" id="CHEBI:16567"/>
        <label>1</label>
    </ligand>
</feature>
<feature type="binding site" evidence="1">
    <location>
        <begin position="82"/>
        <end position="83"/>
    </location>
    <ligand>
        <name>5-phospho-alpha-D-ribose 1-diphosphate</name>
        <dbReference type="ChEBI" id="CHEBI:58017"/>
    </ligand>
</feature>
<feature type="binding site" evidence="1">
    <location>
        <position position="87"/>
    </location>
    <ligand>
        <name>5-phospho-alpha-D-ribose 1-diphosphate</name>
        <dbReference type="ChEBI" id="CHEBI:58017"/>
    </ligand>
</feature>
<feature type="binding site" evidence="1">
    <location>
        <begin position="89"/>
        <end position="92"/>
    </location>
    <ligand>
        <name>5-phospho-alpha-D-ribose 1-diphosphate</name>
        <dbReference type="ChEBI" id="CHEBI:58017"/>
    </ligand>
</feature>
<feature type="binding site" evidence="1">
    <location>
        <position position="91"/>
    </location>
    <ligand>
        <name>Mg(2+)</name>
        <dbReference type="ChEBI" id="CHEBI:18420"/>
        <label>1</label>
    </ligand>
</feature>
<feature type="binding site" evidence="1">
    <location>
        <begin position="107"/>
        <end position="115"/>
    </location>
    <ligand>
        <name>5-phospho-alpha-D-ribose 1-diphosphate</name>
        <dbReference type="ChEBI" id="CHEBI:58017"/>
    </ligand>
</feature>
<feature type="binding site" evidence="1">
    <location>
        <position position="110"/>
    </location>
    <ligand>
        <name>anthranilate</name>
        <dbReference type="ChEBI" id="CHEBI:16567"/>
        <label>1</label>
    </ligand>
</feature>
<feature type="binding site" evidence="1">
    <location>
        <position position="119"/>
    </location>
    <ligand>
        <name>5-phospho-alpha-D-ribose 1-diphosphate</name>
        <dbReference type="ChEBI" id="CHEBI:58017"/>
    </ligand>
</feature>
<feature type="binding site" evidence="1">
    <location>
        <position position="165"/>
    </location>
    <ligand>
        <name>anthranilate</name>
        <dbReference type="ChEBI" id="CHEBI:16567"/>
        <label>2</label>
    </ligand>
</feature>
<feature type="binding site" evidence="1">
    <location>
        <position position="224"/>
    </location>
    <ligand>
        <name>Mg(2+)</name>
        <dbReference type="ChEBI" id="CHEBI:18420"/>
        <label>2</label>
    </ligand>
</feature>
<feature type="binding site" evidence="1">
    <location>
        <position position="225"/>
    </location>
    <ligand>
        <name>Mg(2+)</name>
        <dbReference type="ChEBI" id="CHEBI:18420"/>
        <label>1</label>
    </ligand>
</feature>
<feature type="binding site" evidence="1">
    <location>
        <position position="225"/>
    </location>
    <ligand>
        <name>Mg(2+)</name>
        <dbReference type="ChEBI" id="CHEBI:18420"/>
        <label>2</label>
    </ligand>
</feature>
<accession>B7JES7</accession>
<organism>
    <name type="scientific">Bacillus cereus (strain AH820)</name>
    <dbReference type="NCBI Taxonomy" id="405535"/>
    <lineage>
        <taxon>Bacteria</taxon>
        <taxon>Bacillati</taxon>
        <taxon>Bacillota</taxon>
        <taxon>Bacilli</taxon>
        <taxon>Bacillales</taxon>
        <taxon>Bacillaceae</taxon>
        <taxon>Bacillus</taxon>
        <taxon>Bacillus cereus group</taxon>
    </lineage>
</organism>
<gene>
    <name evidence="1" type="primary">trpD</name>
    <name type="ordered locus">BCAH820_1318</name>
</gene>
<dbReference type="EC" id="2.4.2.18" evidence="1"/>
<dbReference type="EMBL" id="CP001283">
    <property type="protein sequence ID" value="ACK92260.1"/>
    <property type="molecule type" value="Genomic_DNA"/>
</dbReference>
<dbReference type="RefSeq" id="WP_001067344.1">
    <property type="nucleotide sequence ID" value="NC_011773.1"/>
</dbReference>
<dbReference type="SMR" id="B7JES7"/>
<dbReference type="GeneID" id="45021250"/>
<dbReference type="KEGG" id="bcu:BCAH820_1318"/>
<dbReference type="HOGENOM" id="CLU_034315_2_1_9"/>
<dbReference type="UniPathway" id="UPA00035">
    <property type="reaction ID" value="UER00041"/>
</dbReference>
<dbReference type="Proteomes" id="UP000001363">
    <property type="component" value="Chromosome"/>
</dbReference>
<dbReference type="GO" id="GO:0005829">
    <property type="term" value="C:cytosol"/>
    <property type="evidence" value="ECO:0007669"/>
    <property type="project" value="TreeGrafter"/>
</dbReference>
<dbReference type="GO" id="GO:0004048">
    <property type="term" value="F:anthranilate phosphoribosyltransferase activity"/>
    <property type="evidence" value="ECO:0007669"/>
    <property type="project" value="UniProtKB-UniRule"/>
</dbReference>
<dbReference type="GO" id="GO:0000287">
    <property type="term" value="F:magnesium ion binding"/>
    <property type="evidence" value="ECO:0007669"/>
    <property type="project" value="UniProtKB-UniRule"/>
</dbReference>
<dbReference type="GO" id="GO:0000162">
    <property type="term" value="P:L-tryptophan biosynthetic process"/>
    <property type="evidence" value="ECO:0007669"/>
    <property type="project" value="UniProtKB-UniRule"/>
</dbReference>
<dbReference type="FunFam" id="3.40.1030.10:FF:000002">
    <property type="entry name" value="Anthranilate phosphoribosyltransferase"/>
    <property type="match status" value="1"/>
</dbReference>
<dbReference type="Gene3D" id="3.40.1030.10">
    <property type="entry name" value="Nucleoside phosphorylase/phosphoribosyltransferase catalytic domain"/>
    <property type="match status" value="1"/>
</dbReference>
<dbReference type="Gene3D" id="1.20.970.10">
    <property type="entry name" value="Transferase, Pyrimidine Nucleoside Phosphorylase, Chain C"/>
    <property type="match status" value="1"/>
</dbReference>
<dbReference type="HAMAP" id="MF_00211">
    <property type="entry name" value="TrpD"/>
    <property type="match status" value="1"/>
</dbReference>
<dbReference type="InterPro" id="IPR005940">
    <property type="entry name" value="Anthranilate_Pribosyl_Tfrase"/>
</dbReference>
<dbReference type="InterPro" id="IPR000312">
    <property type="entry name" value="Glycosyl_Trfase_fam3"/>
</dbReference>
<dbReference type="InterPro" id="IPR017459">
    <property type="entry name" value="Glycosyl_Trfase_fam3_N_dom"/>
</dbReference>
<dbReference type="InterPro" id="IPR036320">
    <property type="entry name" value="Glycosyl_Trfase_fam3_N_dom_sf"/>
</dbReference>
<dbReference type="InterPro" id="IPR035902">
    <property type="entry name" value="Nuc_phospho_transferase"/>
</dbReference>
<dbReference type="NCBIfam" id="TIGR01245">
    <property type="entry name" value="trpD"/>
    <property type="match status" value="1"/>
</dbReference>
<dbReference type="PANTHER" id="PTHR43285">
    <property type="entry name" value="ANTHRANILATE PHOSPHORIBOSYLTRANSFERASE"/>
    <property type="match status" value="1"/>
</dbReference>
<dbReference type="PANTHER" id="PTHR43285:SF2">
    <property type="entry name" value="ANTHRANILATE PHOSPHORIBOSYLTRANSFERASE"/>
    <property type="match status" value="1"/>
</dbReference>
<dbReference type="Pfam" id="PF02885">
    <property type="entry name" value="Glycos_trans_3N"/>
    <property type="match status" value="1"/>
</dbReference>
<dbReference type="Pfam" id="PF00591">
    <property type="entry name" value="Glycos_transf_3"/>
    <property type="match status" value="1"/>
</dbReference>
<dbReference type="SUPFAM" id="SSF52418">
    <property type="entry name" value="Nucleoside phosphorylase/phosphoribosyltransferase catalytic domain"/>
    <property type="match status" value="1"/>
</dbReference>
<dbReference type="SUPFAM" id="SSF47648">
    <property type="entry name" value="Nucleoside phosphorylase/phosphoribosyltransferase N-terminal domain"/>
    <property type="match status" value="1"/>
</dbReference>
<name>TRPD_BACC0</name>